<reference key="1">
    <citation type="journal article" date="2006" name="Mol. Microbiol.">
        <title>Role of pathogenicity island-associated integrases in the genome plasticity of uropathogenic Escherichia coli strain 536.</title>
        <authorList>
            <person name="Hochhut B."/>
            <person name="Wilde C."/>
            <person name="Balling G."/>
            <person name="Middendorf B."/>
            <person name="Dobrindt U."/>
            <person name="Brzuszkiewicz E."/>
            <person name="Gottschalk G."/>
            <person name="Carniel E."/>
            <person name="Hacker J."/>
        </authorList>
    </citation>
    <scope>NUCLEOTIDE SEQUENCE [LARGE SCALE GENOMIC DNA]</scope>
    <source>
        <strain>536 / UPEC</strain>
    </source>
</reference>
<dbReference type="EMBL" id="CP000247">
    <property type="protein sequence ID" value="ABG71275.1"/>
    <property type="molecule type" value="Genomic_DNA"/>
</dbReference>
<dbReference type="RefSeq" id="WP_000243741.1">
    <property type="nucleotide sequence ID" value="NC_008253.1"/>
</dbReference>
<dbReference type="SMR" id="Q0TCQ4"/>
<dbReference type="GeneID" id="93778776"/>
<dbReference type="KEGG" id="ecp:ECP_3293"/>
<dbReference type="HOGENOM" id="CLU_059558_1_1_6"/>
<dbReference type="Proteomes" id="UP000009182">
    <property type="component" value="Chromosome"/>
</dbReference>
<dbReference type="GO" id="GO:0005524">
    <property type="term" value="F:ATP binding"/>
    <property type="evidence" value="ECO:0007669"/>
    <property type="project" value="UniProtKB-UniRule"/>
</dbReference>
<dbReference type="GO" id="GO:0005525">
    <property type="term" value="F:GTP binding"/>
    <property type="evidence" value="ECO:0007669"/>
    <property type="project" value="UniProtKB-UniRule"/>
</dbReference>
<dbReference type="GO" id="GO:0003723">
    <property type="term" value="F:RNA binding"/>
    <property type="evidence" value="ECO:0007669"/>
    <property type="project" value="UniProtKB-KW"/>
</dbReference>
<dbReference type="Gene3D" id="3.40.50.300">
    <property type="entry name" value="P-loop containing nucleotide triphosphate hydrolases"/>
    <property type="match status" value="1"/>
</dbReference>
<dbReference type="HAMAP" id="MF_00636">
    <property type="entry name" value="RapZ_like"/>
    <property type="match status" value="1"/>
</dbReference>
<dbReference type="InterPro" id="IPR027417">
    <property type="entry name" value="P-loop_NTPase"/>
</dbReference>
<dbReference type="InterPro" id="IPR005337">
    <property type="entry name" value="RapZ-like"/>
</dbReference>
<dbReference type="InterPro" id="IPR053930">
    <property type="entry name" value="RapZ-like_N"/>
</dbReference>
<dbReference type="InterPro" id="IPR053931">
    <property type="entry name" value="RapZ_C"/>
</dbReference>
<dbReference type="NCBIfam" id="NF003828">
    <property type="entry name" value="PRK05416.1"/>
    <property type="match status" value="1"/>
</dbReference>
<dbReference type="PANTHER" id="PTHR30448">
    <property type="entry name" value="RNASE ADAPTER PROTEIN RAPZ"/>
    <property type="match status" value="1"/>
</dbReference>
<dbReference type="PANTHER" id="PTHR30448:SF0">
    <property type="entry name" value="RNASE ADAPTER PROTEIN RAPZ"/>
    <property type="match status" value="1"/>
</dbReference>
<dbReference type="Pfam" id="PF22740">
    <property type="entry name" value="PapZ_C"/>
    <property type="match status" value="1"/>
</dbReference>
<dbReference type="Pfam" id="PF03668">
    <property type="entry name" value="RapZ-like_N"/>
    <property type="match status" value="1"/>
</dbReference>
<dbReference type="PIRSF" id="PIRSF005052">
    <property type="entry name" value="P-loopkin"/>
    <property type="match status" value="1"/>
</dbReference>
<dbReference type="SUPFAM" id="SSF52540">
    <property type="entry name" value="P-loop containing nucleoside triphosphate hydrolases"/>
    <property type="match status" value="1"/>
</dbReference>
<organism>
    <name type="scientific">Escherichia coli O6:K15:H31 (strain 536 / UPEC)</name>
    <dbReference type="NCBI Taxonomy" id="362663"/>
    <lineage>
        <taxon>Bacteria</taxon>
        <taxon>Pseudomonadati</taxon>
        <taxon>Pseudomonadota</taxon>
        <taxon>Gammaproteobacteria</taxon>
        <taxon>Enterobacterales</taxon>
        <taxon>Enterobacteriaceae</taxon>
        <taxon>Escherichia</taxon>
    </lineage>
</organism>
<name>RAPZ_ECOL5</name>
<protein>
    <recommendedName>
        <fullName evidence="1">RNase adapter protein RapZ</fullName>
    </recommendedName>
</protein>
<accession>Q0TCQ4</accession>
<comment type="function">
    <text evidence="1">Modulates the synthesis of GlmS, by affecting the processing and stability of the regulatory small RNA GlmZ. When glucosamine-6-phosphate (GlcN6P) concentrations are high in the cell, RapZ binds GlmZ and targets it to cleavage by RNase E. Consequently, GlmZ is inactivated and unable to activate GlmS synthesis. Under low GlcN6P concentrations, RapZ is sequestered and inactivated by an other regulatory small RNA, GlmY, preventing GlmZ degradation and leading to synthesis of GlmS.</text>
</comment>
<comment type="subunit">
    <text evidence="1">Homotrimer.</text>
</comment>
<comment type="similarity">
    <text evidence="1">Belongs to the RapZ-like family. RapZ subfamily.</text>
</comment>
<sequence>MVLMIVSGRSGSGKSVALRALEDMGFYCVDNLPVVLLPDLARTLADREISAAVSIDVRNMPESPEIFEQAMSNLPDAFSPQLLFLDADRNTLIRRYSDTRRLHPLSSKNLSLESAIDKESDLLEPLRSRADLIVDTSEMSVHELAEMLRTRLLGKRERELTMVFESFGFKHGIPIDADYVFDVRFLPNPHWDPKLRPMTGLDKPVAAFLDRHTEVHNFIYQTRSYLELWLPMLETNNRSYLTVAIGCTGGKHRSVYIAEQLADYFRSRGKNVQSRHRTLEKRKP</sequence>
<evidence type="ECO:0000255" key="1">
    <source>
        <dbReference type="HAMAP-Rule" id="MF_00636"/>
    </source>
</evidence>
<keyword id="KW-0067">ATP-binding</keyword>
<keyword id="KW-0342">GTP-binding</keyword>
<keyword id="KW-0547">Nucleotide-binding</keyword>
<keyword id="KW-0694">RNA-binding</keyword>
<proteinExistence type="inferred from homology"/>
<feature type="chain" id="PRO_0000258963" description="RNase adapter protein RapZ">
    <location>
        <begin position="1"/>
        <end position="284"/>
    </location>
</feature>
<feature type="region of interest" description="RNA-binding" evidence="1">
    <location>
        <begin position="266"/>
        <end position="284"/>
    </location>
</feature>
<feature type="binding site" evidence="1">
    <location>
        <begin position="8"/>
        <end position="15"/>
    </location>
    <ligand>
        <name>ATP</name>
        <dbReference type="ChEBI" id="CHEBI:30616"/>
    </ligand>
</feature>
<feature type="binding site" evidence="1">
    <location>
        <begin position="56"/>
        <end position="59"/>
    </location>
    <ligand>
        <name>GTP</name>
        <dbReference type="ChEBI" id="CHEBI:37565"/>
    </ligand>
</feature>
<gene>
    <name evidence="1" type="primary">rapZ</name>
    <name type="ordered locus">ECP_3293</name>
</gene>